<feature type="chain" id="PRO_0000275242" description="Potassium/proton antiporter CemA">
    <location>
        <begin position="1"/>
        <end position="229"/>
    </location>
</feature>
<feature type="transmembrane region" description="Helical" evidence="1">
    <location>
        <begin position="7"/>
        <end position="27"/>
    </location>
</feature>
<feature type="transmembrane region" description="Helical" evidence="1">
    <location>
        <begin position="107"/>
        <end position="127"/>
    </location>
</feature>
<feature type="transmembrane region" description="Helical" evidence="1">
    <location>
        <begin position="189"/>
        <end position="209"/>
    </location>
</feature>
<protein>
    <recommendedName>
        <fullName evidence="1">Potassium/proton antiporter CemA</fullName>
    </recommendedName>
    <alternativeName>
        <fullName evidence="1">Chloroplast envelope membrane protein A</fullName>
        <shortName evidence="1">CemA</shortName>
    </alternativeName>
</protein>
<reference key="1">
    <citation type="journal article" date="2006" name="Transgenic Res.">
        <title>Efficient and stable transformation of Lactuca sativa L. cv. Cisco (lettuce) plastids.</title>
        <authorList>
            <person name="Kanamoto H."/>
            <person name="Yamashita A."/>
            <person name="Asao H."/>
            <person name="Okumura S."/>
            <person name="Takase H."/>
            <person name="Hattori M."/>
            <person name="Yokota A."/>
            <person name="Tomizawa K."/>
        </authorList>
    </citation>
    <scope>NUCLEOTIDE SEQUENCE [LARGE SCALE GENOMIC DNA]</scope>
    <source>
        <strain>cv. Cisco</strain>
    </source>
</reference>
<reference key="2">
    <citation type="submission" date="2006-01" db="EMBL/GenBank/DDBJ databases">
        <title>A comparison of the first two published chloroplast genomes in Asteraceae: Lactuca and Helianthus.</title>
        <authorList>
            <person name="Timme R.E."/>
            <person name="Kuehl J.V."/>
            <person name="Boore J.L."/>
            <person name="Jansen R.K."/>
        </authorList>
    </citation>
    <scope>NUCLEOTIDE SEQUENCE [LARGE SCALE GENOMIC DNA]</scope>
    <source>
        <strain>cv. Salinas</strain>
    </source>
</reference>
<comment type="function">
    <text evidence="1">Contributes to K(+)/H(+) antiport activity by supporting proton efflux to control proton extrusion and homeostasis in chloroplasts in a light-dependent manner to modulate photosynthesis. Prevents excessive induction of non-photochemical quenching (NPQ) under continuous-light conditions. Indirectly promotes efficient inorganic carbon uptake into chloroplasts.</text>
</comment>
<comment type="catalytic activity">
    <reaction evidence="1">
        <text>K(+)(in) + H(+)(out) = K(+)(out) + H(+)(in)</text>
        <dbReference type="Rhea" id="RHEA:29467"/>
        <dbReference type="ChEBI" id="CHEBI:15378"/>
        <dbReference type="ChEBI" id="CHEBI:29103"/>
    </reaction>
</comment>
<comment type="subcellular location">
    <subcellularLocation>
        <location evidence="1">Plastid</location>
        <location evidence="1">Chloroplast inner membrane</location>
        <topology evidence="1">Multi-pass membrane protein</topology>
    </subcellularLocation>
</comment>
<comment type="similarity">
    <text evidence="1 2">Belongs to the CemA family.</text>
</comment>
<evidence type="ECO:0000255" key="1">
    <source>
        <dbReference type="HAMAP-Rule" id="MF_01308"/>
    </source>
</evidence>
<evidence type="ECO:0000305" key="2"/>
<geneLocation type="chloroplast"/>
<organism>
    <name type="scientific">Lactuca sativa</name>
    <name type="common">Garden lettuce</name>
    <dbReference type="NCBI Taxonomy" id="4236"/>
    <lineage>
        <taxon>Eukaryota</taxon>
        <taxon>Viridiplantae</taxon>
        <taxon>Streptophyta</taxon>
        <taxon>Embryophyta</taxon>
        <taxon>Tracheophyta</taxon>
        <taxon>Spermatophyta</taxon>
        <taxon>Magnoliopsida</taxon>
        <taxon>eudicotyledons</taxon>
        <taxon>Gunneridae</taxon>
        <taxon>Pentapetalae</taxon>
        <taxon>asterids</taxon>
        <taxon>campanulids</taxon>
        <taxon>Asterales</taxon>
        <taxon>Asteraceae</taxon>
        <taxon>Cichorioideae</taxon>
        <taxon>Cichorieae</taxon>
        <taxon>Lactucinae</taxon>
        <taxon>Lactuca</taxon>
    </lineage>
</organism>
<keyword id="KW-0050">Antiport</keyword>
<keyword id="KW-0150">Chloroplast</keyword>
<keyword id="KW-0375">Hydrogen ion transport</keyword>
<keyword id="KW-0406">Ion transport</keyword>
<keyword id="KW-0472">Membrane</keyword>
<keyword id="KW-0934">Plastid</keyword>
<keyword id="KW-1001">Plastid inner membrane</keyword>
<keyword id="KW-0630">Potassium</keyword>
<keyword id="KW-0633">Potassium transport</keyword>
<keyword id="KW-0812">Transmembrane</keyword>
<keyword id="KW-1133">Transmembrane helix</keyword>
<keyword id="KW-0813">Transport</keyword>
<accession>Q332W6</accession>
<gene>
    <name evidence="1" type="primary">cemA</name>
</gene>
<dbReference type="EMBL" id="AP007232">
    <property type="protein sequence ID" value="BAE47606.1"/>
    <property type="molecule type" value="Genomic_DNA"/>
</dbReference>
<dbReference type="EMBL" id="DQ383816">
    <property type="protein sequence ID" value="ABD47245.1"/>
    <property type="molecule type" value="Genomic_DNA"/>
</dbReference>
<dbReference type="RefSeq" id="YP_398341.1">
    <property type="nucleotide sequence ID" value="NC_007578.1"/>
</dbReference>
<dbReference type="GeneID" id="3772786"/>
<dbReference type="KEGG" id="lsv:3772786"/>
<dbReference type="OrthoDB" id="993at2759"/>
<dbReference type="GO" id="GO:0009706">
    <property type="term" value="C:chloroplast inner membrane"/>
    <property type="evidence" value="ECO:0007669"/>
    <property type="project" value="UniProtKB-SubCell"/>
</dbReference>
<dbReference type="GO" id="GO:0015297">
    <property type="term" value="F:antiporter activity"/>
    <property type="evidence" value="ECO:0007669"/>
    <property type="project" value="UniProtKB-KW"/>
</dbReference>
<dbReference type="GO" id="GO:0015078">
    <property type="term" value="F:proton transmembrane transporter activity"/>
    <property type="evidence" value="ECO:0007669"/>
    <property type="project" value="UniProtKB-UniRule"/>
</dbReference>
<dbReference type="GO" id="GO:0006813">
    <property type="term" value="P:potassium ion transport"/>
    <property type="evidence" value="ECO:0007669"/>
    <property type="project" value="UniProtKB-UniRule"/>
</dbReference>
<dbReference type="HAMAP" id="MF_01308">
    <property type="entry name" value="CemA_PxcA"/>
    <property type="match status" value="1"/>
</dbReference>
<dbReference type="InterPro" id="IPR004282">
    <property type="entry name" value="CemA"/>
</dbReference>
<dbReference type="PANTHER" id="PTHR33650:SF2">
    <property type="entry name" value="CHLOROPLAST ENVELOPE MEMBRANE PROTEIN"/>
    <property type="match status" value="1"/>
</dbReference>
<dbReference type="PANTHER" id="PTHR33650">
    <property type="entry name" value="CHLOROPLAST ENVELOPE MEMBRANE PROTEIN-RELATED"/>
    <property type="match status" value="1"/>
</dbReference>
<dbReference type="Pfam" id="PF03040">
    <property type="entry name" value="CemA"/>
    <property type="match status" value="1"/>
</dbReference>
<proteinExistence type="inferred from homology"/>
<name>CEMA_LACSA</name>
<sequence>MEKKKAFTPLLYLASIIFLPWWISLSFQKSMESWVTNWWNTRQSEPFLNDIEEKSILEKFIELEELLFLEEMIKEYSETHLQNLRIGIHKETIQLIKIHNEGRIHTILHFSTNIICFIILSGYSLLGNKELVILNSWVQEFLYNLSDTIKAFSLLLLTDLCIGFHSPHGWELMIGFVYKDFGFVHNEQIISGLVSTFPVILDTIFKYWIFRYLNRVSPSLVVIYHSMND</sequence>